<protein>
    <recommendedName>
        <fullName evidence="1">Probable [Fe-S]-dependent transcriptional repressor</fullName>
    </recommendedName>
</protein>
<proteinExistence type="inferred from homology"/>
<dbReference type="EMBL" id="CP001113">
    <property type="protein sequence ID" value="ACF63940.1"/>
    <property type="molecule type" value="Genomic_DNA"/>
</dbReference>
<dbReference type="RefSeq" id="WP_000157587.1">
    <property type="nucleotide sequence ID" value="NZ_CCMR01000004.1"/>
</dbReference>
<dbReference type="SMR" id="B4SVL0"/>
<dbReference type="KEGG" id="see:SNSL254_A3780"/>
<dbReference type="HOGENOM" id="CLU_189182_0_0_6"/>
<dbReference type="Proteomes" id="UP000008824">
    <property type="component" value="Chromosome"/>
</dbReference>
<dbReference type="GO" id="GO:0003677">
    <property type="term" value="F:DNA binding"/>
    <property type="evidence" value="ECO:0007669"/>
    <property type="project" value="UniProtKB-KW"/>
</dbReference>
<dbReference type="GO" id="GO:0005506">
    <property type="term" value="F:iron ion binding"/>
    <property type="evidence" value="ECO:0007669"/>
    <property type="project" value="UniProtKB-UniRule"/>
</dbReference>
<dbReference type="GO" id="GO:0051536">
    <property type="term" value="F:iron-sulfur cluster binding"/>
    <property type="evidence" value="ECO:0007669"/>
    <property type="project" value="UniProtKB-KW"/>
</dbReference>
<dbReference type="Gene3D" id="1.10.10.10">
    <property type="entry name" value="Winged helix-like DNA-binding domain superfamily/Winged helix DNA-binding domain"/>
    <property type="match status" value="1"/>
</dbReference>
<dbReference type="HAMAP" id="MF_01586">
    <property type="entry name" value="FeoC"/>
    <property type="match status" value="1"/>
</dbReference>
<dbReference type="InterPro" id="IPR023732">
    <property type="entry name" value="FeoC"/>
</dbReference>
<dbReference type="InterPro" id="IPR015102">
    <property type="entry name" value="Tscrpt_reg_HTH_FeoC"/>
</dbReference>
<dbReference type="InterPro" id="IPR036388">
    <property type="entry name" value="WH-like_DNA-bd_sf"/>
</dbReference>
<dbReference type="InterPro" id="IPR036390">
    <property type="entry name" value="WH_DNA-bd_sf"/>
</dbReference>
<dbReference type="NCBIfam" id="NF011960">
    <property type="entry name" value="PRK15431.1"/>
    <property type="match status" value="1"/>
</dbReference>
<dbReference type="Pfam" id="PF09012">
    <property type="entry name" value="FeoC"/>
    <property type="match status" value="1"/>
</dbReference>
<dbReference type="SUPFAM" id="SSF46785">
    <property type="entry name" value="Winged helix' DNA-binding domain"/>
    <property type="match status" value="1"/>
</dbReference>
<reference key="1">
    <citation type="journal article" date="2011" name="J. Bacteriol.">
        <title>Comparative genomics of 28 Salmonella enterica isolates: evidence for CRISPR-mediated adaptive sublineage evolution.</title>
        <authorList>
            <person name="Fricke W.F."/>
            <person name="Mammel M.K."/>
            <person name="McDermott P.F."/>
            <person name="Tartera C."/>
            <person name="White D.G."/>
            <person name="Leclerc J.E."/>
            <person name="Ravel J."/>
            <person name="Cebula T.A."/>
        </authorList>
    </citation>
    <scope>NUCLEOTIDE SEQUENCE [LARGE SCALE GENOMIC DNA]</scope>
    <source>
        <strain>SL254</strain>
    </source>
</reference>
<organism>
    <name type="scientific">Salmonella newport (strain SL254)</name>
    <dbReference type="NCBI Taxonomy" id="423368"/>
    <lineage>
        <taxon>Bacteria</taxon>
        <taxon>Pseudomonadati</taxon>
        <taxon>Pseudomonadota</taxon>
        <taxon>Gammaproteobacteria</taxon>
        <taxon>Enterobacterales</taxon>
        <taxon>Enterobacteriaceae</taxon>
        <taxon>Salmonella</taxon>
    </lineage>
</organism>
<evidence type="ECO:0000255" key="1">
    <source>
        <dbReference type="HAMAP-Rule" id="MF_01586"/>
    </source>
</evidence>
<feature type="chain" id="PRO_1000201335" description="Probable [Fe-S]-dependent transcriptional repressor">
    <location>
        <begin position="1"/>
        <end position="78"/>
    </location>
</feature>
<feature type="binding site" evidence="1">
    <location>
        <position position="56"/>
    </location>
    <ligand>
        <name>iron-sulfur cluster</name>
        <dbReference type="ChEBI" id="CHEBI:30408"/>
    </ligand>
</feature>
<feature type="binding site" evidence="1">
    <location>
        <position position="61"/>
    </location>
    <ligand>
        <name>iron-sulfur cluster</name>
        <dbReference type="ChEBI" id="CHEBI:30408"/>
    </ligand>
</feature>
<feature type="binding site" evidence="1">
    <location>
        <position position="64"/>
    </location>
    <ligand>
        <name>iron-sulfur cluster</name>
        <dbReference type="ChEBI" id="CHEBI:30408"/>
    </ligand>
</feature>
<feature type="binding site" evidence="1">
    <location>
        <position position="70"/>
    </location>
    <ligand>
        <name>iron-sulfur cluster</name>
        <dbReference type="ChEBI" id="CHEBI:30408"/>
    </ligand>
</feature>
<accession>B4SVL0</accession>
<gene>
    <name evidence="1" type="primary">feoC</name>
    <name type="ordered locus">SNSL254_A3780</name>
</gene>
<comment type="function">
    <text evidence="1">May function as a transcriptional regulator that controls feoABC expression.</text>
</comment>
<comment type="similarity">
    <text evidence="1">Belongs to the FeoC family.</text>
</comment>
<sequence>MASLIQVRDLLALRGRMEATQISHTLHAPQPMIDAMLNQLEIMGKAVRIPEEADGCLSGSCKSCPEGKACLREWWALR</sequence>
<keyword id="KW-0238">DNA-binding</keyword>
<keyword id="KW-0408">Iron</keyword>
<keyword id="KW-0411">Iron-sulfur</keyword>
<keyword id="KW-0479">Metal-binding</keyword>
<keyword id="KW-0678">Repressor</keyword>
<keyword id="KW-0804">Transcription</keyword>
<keyword id="KW-0805">Transcription regulation</keyword>
<name>FEOC_SALNS</name>